<accession>P80335</accession>
<dbReference type="PIR" id="S43635">
    <property type="entry name" value="S43635"/>
</dbReference>
<dbReference type="UniPathway" id="UPA00705"/>
<dbReference type="Proteomes" id="UP000694395">
    <property type="component" value="Unplaced"/>
</dbReference>
<dbReference type="GO" id="GO:0005743">
    <property type="term" value="C:mitochondrial inner membrane"/>
    <property type="evidence" value="ECO:0007669"/>
    <property type="project" value="UniProtKB-SubCell"/>
</dbReference>
<dbReference type="GO" id="GO:0006119">
    <property type="term" value="P:oxidative phosphorylation"/>
    <property type="evidence" value="ECO:0007669"/>
    <property type="project" value="UniProtKB-UniPathway"/>
</dbReference>
<proteinExistence type="evidence at protein level"/>
<sequence length="20" mass="2050">LSGKPAKXHLSVGEQAIAMT</sequence>
<comment type="function">
    <text evidence="1">Component of the cytochrome c oxidase, the last enzyme in the mitochondrial electron transport chain which drives oxidative phosphorylation. The respiratory chain contains 3 multisubunit complexes succinate dehydrogenase (complex II, CII), ubiquinol-cytochrome c oxidoreductase (cytochrome b-c1 complex, complex III, CIII) and cytochrome c oxidase (complex IV, CIV), that cooperate to transfer electrons derived from NADH and succinate to molecular oxygen, creating an electrochemical gradient over the inner membrane that drives transmembrane transport and the ATP synthase. Cytochrome c oxidase is the component of the respiratory chain that catalyzes the reduction of oxygen to water. Electrons originating from reduced cytochrome c in the intermembrane space (IMS) are transferred via the dinuclear copper A center (CU(A)) of subunit 2 and heme A of subunit 1 to the active site in subunit 1, a binuclear center (BNC) formed by heme A3 and copper B (CU(B)). The BNC reduces molecular oxygen to 2 water molecules using 4 electrons from cytochrome c in the IMS and 4 protons from the mitochondrial matrix.</text>
</comment>
<comment type="pathway">
    <text evidence="1">Energy metabolism; oxidative phosphorylation.</text>
</comment>
<comment type="subunit">
    <text evidence="1">Component of the cytochrome c oxidase (complex IV, CIV), a multisubunit enzyme composed of 14 subunits. The complex is composed of a catalytic core of 3 subunits MT-CO1, MT-CO2 and MT-CO3, encoded in the mitochondrial DNA, and 11 supernumerary subunits COX4I, COX5A, COX5B, COX6A, COX6B, COX6C, COX7A, COX7B, COX7C, COX8 and NDUFA4, which are encoded in the nuclear genome. The complex exists as a monomer or a dimer and forms supercomplexes (SCs) in the inner mitochondrial membrane with NADH-ubiquinone oxidoreductase (complex I, CI) and ubiquinol-cytochrome c oxidoreductase (cytochrome b-c1 complex, complex III, CIII), resulting in different assemblies (supercomplex SCI(1)III(2)IV(1) and megacomplex MCI(2)III(2)IV(2)).</text>
</comment>
<comment type="subcellular location">
    <subcellularLocation>
        <location evidence="1">Mitochondrion inner membrane</location>
        <topology evidence="1">Single-pass membrane protein</topology>
    </subcellularLocation>
</comment>
<comment type="similarity">
    <text evidence="3">Belongs to the cytochrome c oxidase VIII family.</text>
</comment>
<protein>
    <recommendedName>
        <fullName>Cytochrome c oxidase subunit 8B, mitochondrial</fullName>
    </recommendedName>
    <alternativeName>
        <fullName>Cytochrome c oxidase polypeptide VIII-liver/heart</fullName>
    </alternativeName>
    <alternativeName>
        <fullName>Cytochrome c oxidase subunit 8H</fullName>
    </alternativeName>
</protein>
<evidence type="ECO:0000250" key="1">
    <source>
        <dbReference type="UniProtKB" id="P10175"/>
    </source>
</evidence>
<evidence type="ECO:0000256" key="2">
    <source>
        <dbReference type="SAM" id="MobiDB-lite"/>
    </source>
</evidence>
<evidence type="ECO:0000305" key="3"/>
<name>COX8B_ONCMY</name>
<organism>
    <name type="scientific">Oncorhynchus mykiss</name>
    <name type="common">Rainbow trout</name>
    <name type="synonym">Salmo gairdneri</name>
    <dbReference type="NCBI Taxonomy" id="8022"/>
    <lineage>
        <taxon>Eukaryota</taxon>
        <taxon>Metazoa</taxon>
        <taxon>Chordata</taxon>
        <taxon>Craniata</taxon>
        <taxon>Vertebrata</taxon>
        <taxon>Euteleostomi</taxon>
        <taxon>Actinopterygii</taxon>
        <taxon>Neopterygii</taxon>
        <taxon>Teleostei</taxon>
        <taxon>Protacanthopterygii</taxon>
        <taxon>Salmoniformes</taxon>
        <taxon>Salmonidae</taxon>
        <taxon>Salmoninae</taxon>
        <taxon>Oncorhynchus</taxon>
    </lineage>
</organism>
<keyword id="KW-0903">Direct protein sequencing</keyword>
<keyword id="KW-0472">Membrane</keyword>
<keyword id="KW-0496">Mitochondrion</keyword>
<keyword id="KW-0999">Mitochondrion inner membrane</keyword>
<feature type="chain" id="PRO_0000150125" description="Cytochrome c oxidase subunit 8B, mitochondrial">
    <location>
        <begin position="1"/>
        <end position="20" status="greater than"/>
    </location>
</feature>
<feature type="region of interest" description="Disordered" evidence="2">
    <location>
        <begin position="1"/>
        <end position="20"/>
    </location>
</feature>
<feature type="non-terminal residue">
    <location>
        <position position="20"/>
    </location>
</feature>
<reference key="1">
    <citation type="journal article" date="1994" name="Eur. J. Biochem.">
        <title>Identification of tissue-specific isoforms for subunits Vb and VIIa of cytochrome c oxidase isolated from rainbow trout.</title>
        <authorList>
            <person name="Freund R."/>
            <person name="Kadenbach B."/>
        </authorList>
    </citation>
    <scope>PROTEIN SEQUENCE</scope>
    <source>
        <tissue>Heart</tissue>
        <tissue>Liver</tissue>
    </source>
</reference>